<keyword id="KW-0053">Apoptosis</keyword>
<keyword id="KW-0963">Cytoplasm</keyword>
<keyword id="KW-0378">Hydrolase</keyword>
<keyword id="KW-0645">Protease</keyword>
<keyword id="KW-1185">Reference proteome</keyword>
<keyword id="KW-0788">Thiol protease</keyword>
<keyword id="KW-0865">Zymogen</keyword>
<feature type="propeptide" id="PRO_0000004593" evidence="3">
    <location>
        <begin position="1"/>
        <end status="unknown"/>
    </location>
</feature>
<feature type="chain" id="PRO_0000004594" description="Caspase-3 subunit p17" evidence="3">
    <location>
        <begin status="unknown"/>
        <end position="186"/>
    </location>
</feature>
<feature type="chain" id="PRO_0000004595" description="Caspase-3 subunit p12" evidence="3">
    <location>
        <begin position="187"/>
        <end position="282"/>
    </location>
</feature>
<feature type="active site" evidence="2">
    <location>
        <position position="131"/>
    </location>
</feature>
<feature type="active site" evidence="2">
    <location>
        <position position="174"/>
    </location>
</feature>
<evidence type="ECO:0000250" key="1"/>
<evidence type="ECO:0000250" key="2">
    <source>
        <dbReference type="UniProtKB" id="P29466"/>
    </source>
</evidence>
<evidence type="ECO:0000250" key="3">
    <source>
        <dbReference type="UniProtKB" id="P42574"/>
    </source>
</evidence>
<evidence type="ECO:0000305" key="4"/>
<gene>
    <name type="primary">casp3</name>
</gene>
<protein>
    <recommendedName>
        <fullName>Caspase-3</fullName>
        <shortName>CASP-3</shortName>
        <ecNumber>3.4.22.56</ecNumber>
    </recommendedName>
    <alternativeName>
        <fullName>Apopain</fullName>
    </alternativeName>
    <alternativeName>
        <fullName>Cysteine protease CPP32</fullName>
        <shortName>xCPP32</shortName>
    </alternativeName>
    <component>
        <recommendedName>
            <fullName>Caspase-3 subunit p17</fullName>
        </recommendedName>
    </component>
    <component>
        <recommendedName>
            <fullName>Caspase-3 subunit p12</fullName>
        </recommendedName>
    </component>
</protein>
<name>CASP3_XENLA</name>
<comment type="function">
    <text evidence="3">Important mediator of apoptosis. At the onset of apoptosis, it proteolytically cleaves poly(ADP-ribose) polymerase PARP1 at a '216-Asp-|-Gly-217' bond (By similarity).</text>
</comment>
<comment type="catalytic activity">
    <reaction evidence="3">
        <text>Strict requirement for an Asp residue at positions P1 and P4. It has a preferred cleavage sequence of Asp-Xaa-Xaa-Asp-|- with a hydrophobic amino-acid residue at P2 and a hydrophilic amino-acid residue at P3, although Val or Ala are also accepted at this position.</text>
        <dbReference type="EC" id="3.4.22.56"/>
    </reaction>
</comment>
<comment type="subunit">
    <text evidence="3">Heterotetramer that consists of two anti-parallel arranged heterodimers, each one formed by a 17 kDa (p17) and a 12 kDa (p12) subunit.</text>
</comment>
<comment type="subcellular location">
    <subcellularLocation>
        <location evidence="3">Cytoplasm</location>
    </subcellularLocation>
</comment>
<comment type="miscellaneous">
    <text evidence="1">The subunits are derived from the precursor sequence by a probable autocatalytic mechanism and probably by other caspases.</text>
</comment>
<comment type="similarity">
    <text evidence="4">Belongs to the peptidase C14A family.</text>
</comment>
<reference key="1">
    <citation type="journal article" date="1997" name="J. Biol. Chem.">
        <title>Induction of apoptosis and CPP32 expression by thyroid hormone in a myoblastic cell line derived from tadpole tail.</title>
        <authorList>
            <person name="Yaoita Y."/>
            <person name="Nakajima K."/>
        </authorList>
    </citation>
    <scope>NUCLEOTIDE SEQUENCE [MRNA]</scope>
</reference>
<organism>
    <name type="scientific">Xenopus laevis</name>
    <name type="common">African clawed frog</name>
    <dbReference type="NCBI Taxonomy" id="8355"/>
    <lineage>
        <taxon>Eukaryota</taxon>
        <taxon>Metazoa</taxon>
        <taxon>Chordata</taxon>
        <taxon>Craniata</taxon>
        <taxon>Vertebrata</taxon>
        <taxon>Euteleostomi</taxon>
        <taxon>Amphibia</taxon>
        <taxon>Batrachia</taxon>
        <taxon>Anura</taxon>
        <taxon>Pipoidea</taxon>
        <taxon>Pipidae</taxon>
        <taxon>Xenopodinae</taxon>
        <taxon>Xenopus</taxon>
        <taxon>Xenopus</taxon>
    </lineage>
</organism>
<dbReference type="EC" id="3.4.22.56"/>
<dbReference type="EMBL" id="D89784">
    <property type="protein sequence ID" value="BAA14018.1"/>
    <property type="molecule type" value="mRNA"/>
</dbReference>
<dbReference type="RefSeq" id="NP_001081225.1">
    <property type="nucleotide sequence ID" value="NM_001087756.1"/>
</dbReference>
<dbReference type="SMR" id="P55866"/>
<dbReference type="MEROPS" id="C14.003"/>
<dbReference type="GeneID" id="397720"/>
<dbReference type="KEGG" id="xla:397720"/>
<dbReference type="AGR" id="Xenbase:XB-GENE-865327"/>
<dbReference type="CTD" id="397720"/>
<dbReference type="Xenbase" id="XB-GENE-865327">
    <property type="gene designation" value="casp3.2.S"/>
</dbReference>
<dbReference type="OrthoDB" id="6116485at2759"/>
<dbReference type="BRENDA" id="3.4.22.56">
    <property type="organism ID" value="6725"/>
</dbReference>
<dbReference type="Proteomes" id="UP000186698">
    <property type="component" value="Chromosome 1S"/>
</dbReference>
<dbReference type="Bgee" id="397720">
    <property type="expression patterns" value="Expressed in zone of skin and 16 other cell types or tissues"/>
</dbReference>
<dbReference type="GO" id="GO:0005737">
    <property type="term" value="C:cytoplasm"/>
    <property type="evidence" value="ECO:0000318"/>
    <property type="project" value="GO_Central"/>
</dbReference>
<dbReference type="GO" id="GO:0031264">
    <property type="term" value="C:death-inducing signaling complex"/>
    <property type="evidence" value="ECO:0000318"/>
    <property type="project" value="GO_Central"/>
</dbReference>
<dbReference type="GO" id="GO:0004197">
    <property type="term" value="F:cysteine-type endopeptidase activity"/>
    <property type="evidence" value="ECO:0000250"/>
    <property type="project" value="UniProtKB"/>
</dbReference>
<dbReference type="GO" id="GO:0004175">
    <property type="term" value="F:endopeptidase activity"/>
    <property type="evidence" value="ECO:0000250"/>
    <property type="project" value="UniProtKB"/>
</dbReference>
<dbReference type="GO" id="GO:0008047">
    <property type="term" value="F:enzyme activator activity"/>
    <property type="evidence" value="ECO:0000318"/>
    <property type="project" value="GO_Central"/>
</dbReference>
<dbReference type="GO" id="GO:0006915">
    <property type="term" value="P:apoptotic process"/>
    <property type="evidence" value="ECO:0000318"/>
    <property type="project" value="GO_Central"/>
</dbReference>
<dbReference type="GO" id="GO:0030218">
    <property type="term" value="P:erythrocyte differentiation"/>
    <property type="evidence" value="ECO:0000318"/>
    <property type="project" value="GO_Central"/>
</dbReference>
<dbReference type="GO" id="GO:0097194">
    <property type="term" value="P:execution phase of apoptosis"/>
    <property type="evidence" value="ECO:0000318"/>
    <property type="project" value="GO_Central"/>
</dbReference>
<dbReference type="GO" id="GO:0030216">
    <property type="term" value="P:keratinocyte differentiation"/>
    <property type="evidence" value="ECO:0000318"/>
    <property type="project" value="GO_Central"/>
</dbReference>
<dbReference type="GO" id="GO:0030182">
    <property type="term" value="P:neuron differentiation"/>
    <property type="evidence" value="ECO:0000318"/>
    <property type="project" value="GO_Central"/>
</dbReference>
<dbReference type="GO" id="GO:0043525">
    <property type="term" value="P:positive regulation of neuron apoptotic process"/>
    <property type="evidence" value="ECO:0000318"/>
    <property type="project" value="GO_Central"/>
</dbReference>
<dbReference type="GO" id="GO:0006508">
    <property type="term" value="P:proteolysis"/>
    <property type="evidence" value="ECO:0000318"/>
    <property type="project" value="GO_Central"/>
</dbReference>
<dbReference type="CDD" id="cd00032">
    <property type="entry name" value="CASc"/>
    <property type="match status" value="1"/>
</dbReference>
<dbReference type="FunFam" id="3.40.50.1460:FF:000001">
    <property type="entry name" value="Caspase-3 preproprotein"/>
    <property type="match status" value="1"/>
</dbReference>
<dbReference type="Gene3D" id="3.40.50.1460">
    <property type="match status" value="1"/>
</dbReference>
<dbReference type="InterPro" id="IPR029030">
    <property type="entry name" value="Caspase-like_dom_sf"/>
</dbReference>
<dbReference type="InterPro" id="IPR033139">
    <property type="entry name" value="Caspase_cys_AS"/>
</dbReference>
<dbReference type="InterPro" id="IPR016129">
    <property type="entry name" value="Caspase_his_AS"/>
</dbReference>
<dbReference type="InterPro" id="IPR002398">
    <property type="entry name" value="Pept_C14"/>
</dbReference>
<dbReference type="InterPro" id="IPR011600">
    <property type="entry name" value="Pept_C14_caspase"/>
</dbReference>
<dbReference type="InterPro" id="IPR002138">
    <property type="entry name" value="Pept_C14_p10"/>
</dbReference>
<dbReference type="InterPro" id="IPR001309">
    <property type="entry name" value="Pept_C14_p20"/>
</dbReference>
<dbReference type="InterPro" id="IPR015917">
    <property type="entry name" value="Pept_C14A"/>
</dbReference>
<dbReference type="PANTHER" id="PTHR10454">
    <property type="entry name" value="CASPASE"/>
    <property type="match status" value="1"/>
</dbReference>
<dbReference type="PANTHER" id="PTHR10454:SF198">
    <property type="entry name" value="CASPASE-3"/>
    <property type="match status" value="1"/>
</dbReference>
<dbReference type="Pfam" id="PF00656">
    <property type="entry name" value="Peptidase_C14"/>
    <property type="match status" value="1"/>
</dbReference>
<dbReference type="PRINTS" id="PR00376">
    <property type="entry name" value="IL1BCENZYME"/>
</dbReference>
<dbReference type="SMART" id="SM00115">
    <property type="entry name" value="CASc"/>
    <property type="match status" value="1"/>
</dbReference>
<dbReference type="SUPFAM" id="SSF52129">
    <property type="entry name" value="Caspase-like"/>
    <property type="match status" value="1"/>
</dbReference>
<dbReference type="PROSITE" id="PS01122">
    <property type="entry name" value="CASPASE_CYS"/>
    <property type="match status" value="1"/>
</dbReference>
<dbReference type="PROSITE" id="PS01121">
    <property type="entry name" value="CASPASE_HIS"/>
    <property type="match status" value="1"/>
</dbReference>
<dbReference type="PROSITE" id="PS50207">
    <property type="entry name" value="CASPASE_P10"/>
    <property type="match status" value="1"/>
</dbReference>
<dbReference type="PROSITE" id="PS50208">
    <property type="entry name" value="CASPASE_P20"/>
    <property type="match status" value="1"/>
</dbReference>
<sequence length="282" mass="32125">MEESQNGVKYGGDATDAKEYFTIQPRSLQNCDLKDIERKTKFAHLQNYRTNYPEMGMCLIINNKNFHSSNMAVRNGTDVDALKLHETFTGLGYEVMVCNDQKSSDIIGRLKKISEEDHSKRSSFVCAILSHGEEDGSICGVDVPIHIKNLTDLFRGDRCKTLVGKPKIFFIQACRGTELDSGIETDSCSEPREEIQRIPVEADFLYAYSTVPGYCSWRDKMDGSWFIQSLCKMIKLYGSHLELIQILTCVNHMVALDFETFHAKKQIPCVVSMLTKSFYFFK</sequence>
<accession>P55866</accession>
<proteinExistence type="evidence at transcript level"/>